<protein>
    <recommendedName>
        <fullName evidence="2">Diacylglycerol kinase</fullName>
        <shortName evidence="2">DAGK</shortName>
        <ecNumber evidence="2">2.7.1.107</ecNumber>
    </recommendedName>
    <alternativeName>
        <fullName evidence="2">Diglyceride kinase</fullName>
        <shortName evidence="2">DGK</shortName>
    </alternativeName>
</protein>
<sequence>MANNTTGFTRIIKAAGYSWKGLRAAWINEAAFRQEGVAVLLAVVIACWLDVDAITRVLLISSVMLVMIVEILNSAIEAVVDRIGSEYHELSGRAKDMGSAAVLIAIIVAVITWCILLWSHFG</sequence>
<feature type="initiator methionine" description="Removed" evidence="1">
    <location>
        <position position="1"/>
    </location>
</feature>
<feature type="chain" id="PRO_0000195261" description="Diacylglycerol kinase">
    <location>
        <begin position="2"/>
        <end position="122"/>
    </location>
</feature>
<feature type="transmembrane region" description="Helical" evidence="3">
    <location>
        <begin position="35"/>
        <end position="55"/>
    </location>
</feature>
<feature type="transmembrane region" description="Helical" evidence="3">
    <location>
        <begin position="57"/>
        <end position="77"/>
    </location>
</feature>
<feature type="transmembrane region" description="Helical" evidence="3">
    <location>
        <begin position="98"/>
        <end position="118"/>
    </location>
</feature>
<feature type="active site" description="Proton acceptor" evidence="2">
    <location>
        <position position="70"/>
    </location>
</feature>
<feature type="binding site" evidence="2">
    <location>
        <position position="10"/>
    </location>
    <ligand>
        <name>ATP</name>
        <dbReference type="ChEBI" id="CHEBI:30616"/>
    </ligand>
</feature>
<feature type="binding site" evidence="2">
    <location>
        <position position="10"/>
    </location>
    <ligand>
        <name>substrate</name>
    </ligand>
</feature>
<feature type="binding site" evidence="2">
    <location>
        <begin position="14"/>
        <end position="19"/>
    </location>
    <ligand>
        <name>substrate</name>
    </ligand>
</feature>
<feature type="binding site" evidence="2">
    <location>
        <position position="17"/>
    </location>
    <ligand>
        <name>ATP</name>
        <dbReference type="ChEBI" id="CHEBI:30616"/>
    </ligand>
</feature>
<feature type="binding site" evidence="2">
    <location>
        <begin position="23"/>
        <end position="26"/>
    </location>
    <ligand>
        <name>substrate</name>
    </ligand>
</feature>
<feature type="binding site" evidence="2">
    <location>
        <position position="29"/>
    </location>
    <ligand>
        <name>a divalent metal cation</name>
        <dbReference type="ChEBI" id="CHEBI:60240"/>
    </ligand>
</feature>
<feature type="binding site" evidence="2">
    <location>
        <position position="29"/>
    </location>
    <ligand>
        <name>ATP</name>
        <dbReference type="ChEBI" id="CHEBI:30616"/>
    </ligand>
</feature>
<feature type="binding site" evidence="2">
    <location>
        <begin position="31"/>
        <end position="35"/>
    </location>
    <ligand>
        <name>substrate</name>
    </ligand>
</feature>
<feature type="binding site" evidence="2">
    <location>
        <begin position="48"/>
        <end position="51"/>
    </location>
    <ligand>
        <name>substrate</name>
    </ligand>
</feature>
<feature type="binding site" evidence="2">
    <location>
        <position position="56"/>
    </location>
    <ligand>
        <name>substrate</name>
    </ligand>
</feature>
<feature type="binding site" evidence="2">
    <location>
        <position position="70"/>
    </location>
    <ligand>
        <name>substrate</name>
    </ligand>
</feature>
<feature type="binding site" evidence="2">
    <location>
        <position position="77"/>
    </location>
    <ligand>
        <name>a divalent metal cation</name>
        <dbReference type="ChEBI" id="CHEBI:60240"/>
    </ligand>
</feature>
<feature type="binding site" evidence="2">
    <location>
        <position position="77"/>
    </location>
    <ligand>
        <name>ATP</name>
        <dbReference type="ChEBI" id="CHEBI:30616"/>
    </ligand>
</feature>
<feature type="binding site" evidence="2">
    <location>
        <begin position="86"/>
        <end position="88"/>
    </location>
    <ligand>
        <name>ATP</name>
        <dbReference type="ChEBI" id="CHEBI:30616"/>
    </ligand>
</feature>
<feature type="binding site" evidence="2">
    <location>
        <begin position="95"/>
        <end position="96"/>
    </location>
    <ligand>
        <name>ATP</name>
        <dbReference type="ChEBI" id="CHEBI:30616"/>
    </ligand>
</feature>
<feature type="binding site" evidence="2">
    <location>
        <position position="99"/>
    </location>
    <ligand>
        <name>substrate</name>
    </ligand>
</feature>
<feature type="binding site" evidence="2">
    <location>
        <begin position="113"/>
        <end position="118"/>
    </location>
    <ligand>
        <name>substrate</name>
    </ligand>
</feature>
<gene>
    <name type="primary">dgkA</name>
    <name type="ordered locus">Z5641</name>
    <name type="ordered locus">ECs5025</name>
</gene>
<evidence type="ECO:0000250" key="1"/>
<evidence type="ECO:0000250" key="2">
    <source>
        <dbReference type="UniProtKB" id="P0ABN1"/>
    </source>
</evidence>
<evidence type="ECO:0000255" key="3"/>
<evidence type="ECO:0000305" key="4"/>
<reference key="1">
    <citation type="journal article" date="2001" name="Nature">
        <title>Genome sequence of enterohaemorrhagic Escherichia coli O157:H7.</title>
        <authorList>
            <person name="Perna N.T."/>
            <person name="Plunkett G. III"/>
            <person name="Burland V."/>
            <person name="Mau B."/>
            <person name="Glasner J.D."/>
            <person name="Rose D.J."/>
            <person name="Mayhew G.F."/>
            <person name="Evans P.S."/>
            <person name="Gregor J."/>
            <person name="Kirkpatrick H.A."/>
            <person name="Posfai G."/>
            <person name="Hackett J."/>
            <person name="Klink S."/>
            <person name="Boutin A."/>
            <person name="Shao Y."/>
            <person name="Miller L."/>
            <person name="Grotbeck E.J."/>
            <person name="Davis N.W."/>
            <person name="Lim A."/>
            <person name="Dimalanta E.T."/>
            <person name="Potamousis K."/>
            <person name="Apodaca J."/>
            <person name="Anantharaman T.S."/>
            <person name="Lin J."/>
            <person name="Yen G."/>
            <person name="Schwartz D.C."/>
            <person name="Welch R.A."/>
            <person name="Blattner F.R."/>
        </authorList>
    </citation>
    <scope>NUCLEOTIDE SEQUENCE [LARGE SCALE GENOMIC DNA]</scope>
    <source>
        <strain>O157:H7 / EDL933 / ATCC 700927 / EHEC</strain>
    </source>
</reference>
<reference key="2">
    <citation type="journal article" date="2001" name="DNA Res.">
        <title>Complete genome sequence of enterohemorrhagic Escherichia coli O157:H7 and genomic comparison with a laboratory strain K-12.</title>
        <authorList>
            <person name="Hayashi T."/>
            <person name="Makino K."/>
            <person name="Ohnishi M."/>
            <person name="Kurokawa K."/>
            <person name="Ishii K."/>
            <person name="Yokoyama K."/>
            <person name="Han C.-G."/>
            <person name="Ohtsubo E."/>
            <person name="Nakayama K."/>
            <person name="Murata T."/>
            <person name="Tanaka M."/>
            <person name="Tobe T."/>
            <person name="Iida T."/>
            <person name="Takami H."/>
            <person name="Honda T."/>
            <person name="Sasakawa C."/>
            <person name="Ogasawara N."/>
            <person name="Yasunaga T."/>
            <person name="Kuhara S."/>
            <person name="Shiba T."/>
            <person name="Hattori M."/>
            <person name="Shinagawa H."/>
        </authorList>
    </citation>
    <scope>NUCLEOTIDE SEQUENCE [LARGE SCALE GENOMIC DNA]</scope>
    <source>
        <strain>O157:H7 / Sakai / RIMD 0509952 / EHEC</strain>
    </source>
</reference>
<dbReference type="EC" id="2.7.1.107" evidence="2"/>
<dbReference type="EMBL" id="AE005174">
    <property type="protein sequence ID" value="AAG59241.1"/>
    <property type="molecule type" value="Genomic_DNA"/>
</dbReference>
<dbReference type="EMBL" id="BA000007">
    <property type="protein sequence ID" value="BAB38448.1"/>
    <property type="molecule type" value="Genomic_DNA"/>
</dbReference>
<dbReference type="PIR" id="A91257">
    <property type="entry name" value="A91257"/>
</dbReference>
<dbReference type="PIR" id="E86097">
    <property type="entry name" value="E86097"/>
</dbReference>
<dbReference type="RefSeq" id="NP_313052.1">
    <property type="nucleotide sequence ID" value="NC_002695.1"/>
</dbReference>
<dbReference type="RefSeq" id="WP_000002907.1">
    <property type="nucleotide sequence ID" value="NZ_VOAI01000027.1"/>
</dbReference>
<dbReference type="BMRB" id="P0ABN3"/>
<dbReference type="SMR" id="P0ABN3"/>
<dbReference type="STRING" id="155864.Z5641"/>
<dbReference type="GeneID" id="914310"/>
<dbReference type="GeneID" id="93777789"/>
<dbReference type="KEGG" id="ece:Z5641"/>
<dbReference type="KEGG" id="ecs:ECs_5025"/>
<dbReference type="PATRIC" id="fig|386585.9.peg.5248"/>
<dbReference type="eggNOG" id="COG0818">
    <property type="taxonomic scope" value="Bacteria"/>
</dbReference>
<dbReference type="HOGENOM" id="CLU_112343_3_1_6"/>
<dbReference type="OMA" id="NNATGLM"/>
<dbReference type="Proteomes" id="UP000000558">
    <property type="component" value="Chromosome"/>
</dbReference>
<dbReference type="Proteomes" id="UP000002519">
    <property type="component" value="Chromosome"/>
</dbReference>
<dbReference type="GO" id="GO:0005886">
    <property type="term" value="C:plasma membrane"/>
    <property type="evidence" value="ECO:0007669"/>
    <property type="project" value="UniProtKB-SubCell"/>
</dbReference>
<dbReference type="GO" id="GO:0005524">
    <property type="term" value="F:ATP binding"/>
    <property type="evidence" value="ECO:0007669"/>
    <property type="project" value="UniProtKB-KW"/>
</dbReference>
<dbReference type="GO" id="GO:0004143">
    <property type="term" value="F:ATP-dependent diacylglycerol kinase activity"/>
    <property type="evidence" value="ECO:0007669"/>
    <property type="project" value="UniProtKB-EC"/>
</dbReference>
<dbReference type="GO" id="GO:0046872">
    <property type="term" value="F:metal ion binding"/>
    <property type="evidence" value="ECO:0007669"/>
    <property type="project" value="UniProtKB-KW"/>
</dbReference>
<dbReference type="GO" id="GO:0006654">
    <property type="term" value="P:phosphatidic acid biosynthetic process"/>
    <property type="evidence" value="ECO:0007669"/>
    <property type="project" value="InterPro"/>
</dbReference>
<dbReference type="CDD" id="cd14264">
    <property type="entry name" value="DAGK_IM"/>
    <property type="match status" value="1"/>
</dbReference>
<dbReference type="FunFam" id="1.10.287.3610:FF:000001">
    <property type="entry name" value="Diacylglycerol kinase"/>
    <property type="match status" value="1"/>
</dbReference>
<dbReference type="Gene3D" id="1.10.287.3610">
    <property type="match status" value="1"/>
</dbReference>
<dbReference type="InterPro" id="IPR000829">
    <property type="entry name" value="DAGK"/>
</dbReference>
<dbReference type="InterPro" id="IPR033718">
    <property type="entry name" value="DAGK_prok"/>
</dbReference>
<dbReference type="InterPro" id="IPR036945">
    <property type="entry name" value="DAGK_sf"/>
</dbReference>
<dbReference type="PANTHER" id="PTHR34299">
    <property type="entry name" value="DIACYLGLYCEROL KINASE"/>
    <property type="match status" value="1"/>
</dbReference>
<dbReference type="PANTHER" id="PTHR34299:SF1">
    <property type="entry name" value="DIACYLGLYCEROL KINASE"/>
    <property type="match status" value="1"/>
</dbReference>
<dbReference type="Pfam" id="PF01219">
    <property type="entry name" value="DAGK_prokar"/>
    <property type="match status" value="1"/>
</dbReference>
<dbReference type="PROSITE" id="PS01069">
    <property type="entry name" value="DAGK_PROKAR"/>
    <property type="match status" value="1"/>
</dbReference>
<comment type="function">
    <text evidence="2">Catalyzes the ATP-dependent phosphorylation of sn-l,2-diacylglycerol (DAG) to phosphatidic acid. Involved in the recycling of diacylglycerol produced as a by-product during membrane-derived oligosaccharide (MDO) biosynthesis.</text>
</comment>
<comment type="catalytic activity">
    <reaction evidence="2">
        <text>a 1,2-diacyl-sn-glycerol + ATP = a 1,2-diacyl-sn-glycero-3-phosphate + ADP + H(+)</text>
        <dbReference type="Rhea" id="RHEA:10272"/>
        <dbReference type="ChEBI" id="CHEBI:15378"/>
        <dbReference type="ChEBI" id="CHEBI:17815"/>
        <dbReference type="ChEBI" id="CHEBI:30616"/>
        <dbReference type="ChEBI" id="CHEBI:58608"/>
        <dbReference type="ChEBI" id="CHEBI:456216"/>
        <dbReference type="EC" id="2.7.1.107"/>
    </reaction>
</comment>
<comment type="cofactor">
    <cofactor evidence="2">
        <name>Mg(2+)</name>
        <dbReference type="ChEBI" id="CHEBI:18420"/>
    </cofactor>
</comment>
<comment type="subcellular location">
    <subcellularLocation>
        <location evidence="2">Cell inner membrane</location>
        <topology evidence="2">Multi-pass membrane protein</topology>
    </subcellularLocation>
</comment>
<comment type="similarity">
    <text evidence="4">Belongs to the bacterial diacylglycerol kinase family.</text>
</comment>
<keyword id="KW-0067">ATP-binding</keyword>
<keyword id="KW-0997">Cell inner membrane</keyword>
<keyword id="KW-1003">Cell membrane</keyword>
<keyword id="KW-0418">Kinase</keyword>
<keyword id="KW-0444">Lipid biosynthesis</keyword>
<keyword id="KW-0443">Lipid metabolism</keyword>
<keyword id="KW-0460">Magnesium</keyword>
<keyword id="KW-0472">Membrane</keyword>
<keyword id="KW-0479">Metal-binding</keyword>
<keyword id="KW-0547">Nucleotide-binding</keyword>
<keyword id="KW-0594">Phospholipid biosynthesis</keyword>
<keyword id="KW-1208">Phospholipid metabolism</keyword>
<keyword id="KW-1185">Reference proteome</keyword>
<keyword id="KW-0808">Transferase</keyword>
<keyword id="KW-0812">Transmembrane</keyword>
<keyword id="KW-1133">Transmembrane helix</keyword>
<accession>P0ABN3</accession>
<accession>P00556</accession>
<name>KDGL_ECO57</name>
<organism>
    <name type="scientific">Escherichia coli O157:H7</name>
    <dbReference type="NCBI Taxonomy" id="83334"/>
    <lineage>
        <taxon>Bacteria</taxon>
        <taxon>Pseudomonadati</taxon>
        <taxon>Pseudomonadota</taxon>
        <taxon>Gammaproteobacteria</taxon>
        <taxon>Enterobacterales</taxon>
        <taxon>Enterobacteriaceae</taxon>
        <taxon>Escherichia</taxon>
    </lineage>
</organism>
<proteinExistence type="inferred from homology"/>